<sequence length="328" mass="35720">MNLQEKTAWITHVARRVIDGDTLSFEEATALLQLPDAVTPFLLGWADVVRKCFHGNRVDLCAIVNARAGRCSEDCRFCTQAACYHTRAPVYPLLPAEGIIRRARAVRSQGIKRFSLVTSGRDPGGDFEKILGITRQLKREVPELKLCASLGIISPTEARALKEAGLDRYHHNLETAASFFPEVCTTHRYEDRVATIRAAQKVGLEVCAGGIIGLGEKPEQRVELALALRELGVTSVPVNILHPVPGTPLATQPPLPALEILRTLAVFRLLLPATTIRYAGGREHNLRDTQVLGLAGGVDALITGDYLTTAGQGTARDRQLIRDLGLEG</sequence>
<accession>B1I4G4</accession>
<protein>
    <recommendedName>
        <fullName evidence="1">Biotin synthase</fullName>
        <ecNumber evidence="1">2.8.1.6</ecNumber>
    </recommendedName>
</protein>
<feature type="chain" id="PRO_0000381345" description="Biotin synthase">
    <location>
        <begin position="1"/>
        <end position="328"/>
    </location>
</feature>
<feature type="domain" description="Radical SAM core" evidence="2">
    <location>
        <begin position="53"/>
        <end position="282"/>
    </location>
</feature>
<feature type="binding site" evidence="1">
    <location>
        <position position="71"/>
    </location>
    <ligand>
        <name>[4Fe-4S] cluster</name>
        <dbReference type="ChEBI" id="CHEBI:49883"/>
        <note>4Fe-4S-S-AdoMet</note>
    </ligand>
</feature>
<feature type="binding site" evidence="1">
    <location>
        <position position="75"/>
    </location>
    <ligand>
        <name>[4Fe-4S] cluster</name>
        <dbReference type="ChEBI" id="CHEBI:49883"/>
        <note>4Fe-4S-S-AdoMet</note>
    </ligand>
</feature>
<feature type="binding site" evidence="1">
    <location>
        <position position="78"/>
    </location>
    <ligand>
        <name>[4Fe-4S] cluster</name>
        <dbReference type="ChEBI" id="CHEBI:49883"/>
        <note>4Fe-4S-S-AdoMet</note>
    </ligand>
</feature>
<feature type="binding site" evidence="1">
    <location>
        <position position="115"/>
    </location>
    <ligand>
        <name>[2Fe-2S] cluster</name>
        <dbReference type="ChEBI" id="CHEBI:190135"/>
    </ligand>
</feature>
<feature type="binding site" evidence="1">
    <location>
        <position position="147"/>
    </location>
    <ligand>
        <name>[2Fe-2S] cluster</name>
        <dbReference type="ChEBI" id="CHEBI:190135"/>
    </ligand>
</feature>
<feature type="binding site" evidence="1">
    <location>
        <position position="207"/>
    </location>
    <ligand>
        <name>[2Fe-2S] cluster</name>
        <dbReference type="ChEBI" id="CHEBI:190135"/>
    </ligand>
</feature>
<feature type="binding site" evidence="1">
    <location>
        <position position="277"/>
    </location>
    <ligand>
        <name>[2Fe-2S] cluster</name>
        <dbReference type="ChEBI" id="CHEBI:190135"/>
    </ligand>
</feature>
<organism>
    <name type="scientific">Desulforudis audaxviator (strain MP104C)</name>
    <dbReference type="NCBI Taxonomy" id="477974"/>
    <lineage>
        <taxon>Bacteria</taxon>
        <taxon>Bacillati</taxon>
        <taxon>Bacillota</taxon>
        <taxon>Clostridia</taxon>
        <taxon>Thermoanaerobacterales</taxon>
        <taxon>Candidatus Desulforudaceae</taxon>
        <taxon>Candidatus Desulforudis</taxon>
    </lineage>
</organism>
<dbReference type="EC" id="2.8.1.6" evidence="1"/>
<dbReference type="EMBL" id="CP000860">
    <property type="protein sequence ID" value="ACA59841.1"/>
    <property type="molecule type" value="Genomic_DNA"/>
</dbReference>
<dbReference type="RefSeq" id="WP_012302426.1">
    <property type="nucleotide sequence ID" value="NC_010424.1"/>
</dbReference>
<dbReference type="SMR" id="B1I4G4"/>
<dbReference type="STRING" id="477974.Daud_1331"/>
<dbReference type="KEGG" id="dau:Daud_1331"/>
<dbReference type="eggNOG" id="COG0502">
    <property type="taxonomic scope" value="Bacteria"/>
</dbReference>
<dbReference type="HOGENOM" id="CLU_033172_2_1_9"/>
<dbReference type="OrthoDB" id="9786826at2"/>
<dbReference type="UniPathway" id="UPA00078">
    <property type="reaction ID" value="UER00162"/>
</dbReference>
<dbReference type="Proteomes" id="UP000008544">
    <property type="component" value="Chromosome"/>
</dbReference>
<dbReference type="GO" id="GO:0051537">
    <property type="term" value="F:2 iron, 2 sulfur cluster binding"/>
    <property type="evidence" value="ECO:0007669"/>
    <property type="project" value="UniProtKB-KW"/>
</dbReference>
<dbReference type="GO" id="GO:0051539">
    <property type="term" value="F:4 iron, 4 sulfur cluster binding"/>
    <property type="evidence" value="ECO:0007669"/>
    <property type="project" value="UniProtKB-KW"/>
</dbReference>
<dbReference type="GO" id="GO:0004076">
    <property type="term" value="F:biotin synthase activity"/>
    <property type="evidence" value="ECO:0007669"/>
    <property type="project" value="UniProtKB-UniRule"/>
</dbReference>
<dbReference type="GO" id="GO:0005506">
    <property type="term" value="F:iron ion binding"/>
    <property type="evidence" value="ECO:0007669"/>
    <property type="project" value="UniProtKB-UniRule"/>
</dbReference>
<dbReference type="GO" id="GO:0009102">
    <property type="term" value="P:biotin biosynthetic process"/>
    <property type="evidence" value="ECO:0007669"/>
    <property type="project" value="UniProtKB-UniRule"/>
</dbReference>
<dbReference type="CDD" id="cd01335">
    <property type="entry name" value="Radical_SAM"/>
    <property type="match status" value="1"/>
</dbReference>
<dbReference type="Gene3D" id="3.20.20.70">
    <property type="entry name" value="Aldolase class I"/>
    <property type="match status" value="1"/>
</dbReference>
<dbReference type="HAMAP" id="MF_01694">
    <property type="entry name" value="BioB"/>
    <property type="match status" value="1"/>
</dbReference>
<dbReference type="InterPro" id="IPR013785">
    <property type="entry name" value="Aldolase_TIM"/>
</dbReference>
<dbReference type="InterPro" id="IPR010722">
    <property type="entry name" value="BATS_dom"/>
</dbReference>
<dbReference type="InterPro" id="IPR002684">
    <property type="entry name" value="Biotin_synth/BioAB"/>
</dbReference>
<dbReference type="InterPro" id="IPR024177">
    <property type="entry name" value="Biotin_synthase"/>
</dbReference>
<dbReference type="InterPro" id="IPR006638">
    <property type="entry name" value="Elp3/MiaA/NifB-like_rSAM"/>
</dbReference>
<dbReference type="InterPro" id="IPR007197">
    <property type="entry name" value="rSAM"/>
</dbReference>
<dbReference type="NCBIfam" id="TIGR00433">
    <property type="entry name" value="bioB"/>
    <property type="match status" value="1"/>
</dbReference>
<dbReference type="PANTHER" id="PTHR22976">
    <property type="entry name" value="BIOTIN SYNTHASE"/>
    <property type="match status" value="1"/>
</dbReference>
<dbReference type="PANTHER" id="PTHR22976:SF2">
    <property type="entry name" value="BIOTIN SYNTHASE, MITOCHONDRIAL"/>
    <property type="match status" value="1"/>
</dbReference>
<dbReference type="Pfam" id="PF06968">
    <property type="entry name" value="BATS"/>
    <property type="match status" value="1"/>
</dbReference>
<dbReference type="Pfam" id="PF04055">
    <property type="entry name" value="Radical_SAM"/>
    <property type="match status" value="1"/>
</dbReference>
<dbReference type="PIRSF" id="PIRSF001619">
    <property type="entry name" value="Biotin_synth"/>
    <property type="match status" value="1"/>
</dbReference>
<dbReference type="SFLD" id="SFLDG01060">
    <property type="entry name" value="BATS_domain_containing"/>
    <property type="match status" value="1"/>
</dbReference>
<dbReference type="SFLD" id="SFLDG01278">
    <property type="entry name" value="biotin_synthase_like"/>
    <property type="match status" value="1"/>
</dbReference>
<dbReference type="SMART" id="SM00876">
    <property type="entry name" value="BATS"/>
    <property type="match status" value="1"/>
</dbReference>
<dbReference type="SMART" id="SM00729">
    <property type="entry name" value="Elp3"/>
    <property type="match status" value="1"/>
</dbReference>
<dbReference type="SUPFAM" id="SSF102114">
    <property type="entry name" value="Radical SAM enzymes"/>
    <property type="match status" value="1"/>
</dbReference>
<dbReference type="PROSITE" id="PS51918">
    <property type="entry name" value="RADICAL_SAM"/>
    <property type="match status" value="1"/>
</dbReference>
<keyword id="KW-0001">2Fe-2S</keyword>
<keyword id="KW-0004">4Fe-4S</keyword>
<keyword id="KW-0093">Biotin biosynthesis</keyword>
<keyword id="KW-0408">Iron</keyword>
<keyword id="KW-0411">Iron-sulfur</keyword>
<keyword id="KW-0479">Metal-binding</keyword>
<keyword id="KW-1185">Reference proteome</keyword>
<keyword id="KW-0949">S-adenosyl-L-methionine</keyword>
<keyword id="KW-0808">Transferase</keyword>
<proteinExistence type="inferred from homology"/>
<gene>
    <name evidence="1" type="primary">bioB</name>
    <name type="ordered locus">Daud_1331</name>
</gene>
<name>BIOB_DESAP</name>
<reference key="1">
    <citation type="submission" date="2007-10" db="EMBL/GenBank/DDBJ databases">
        <title>Complete sequence of chromosome of Desulforudis audaxviator MP104C.</title>
        <authorList>
            <person name="Copeland A."/>
            <person name="Lucas S."/>
            <person name="Lapidus A."/>
            <person name="Barry K."/>
            <person name="Glavina del Rio T."/>
            <person name="Dalin E."/>
            <person name="Tice H."/>
            <person name="Bruce D."/>
            <person name="Pitluck S."/>
            <person name="Lowry S.R."/>
            <person name="Larimer F."/>
            <person name="Land M.L."/>
            <person name="Hauser L."/>
            <person name="Kyrpides N."/>
            <person name="Ivanova N.N."/>
            <person name="Richardson P."/>
        </authorList>
    </citation>
    <scope>NUCLEOTIDE SEQUENCE [LARGE SCALE GENOMIC DNA]</scope>
    <source>
        <strain>MP104C</strain>
    </source>
</reference>
<comment type="function">
    <text evidence="1">Catalyzes the conversion of dethiobiotin (DTB) to biotin by the insertion of a sulfur atom into dethiobiotin via a radical-based mechanism.</text>
</comment>
<comment type="catalytic activity">
    <reaction evidence="1">
        <text>(4R,5S)-dethiobiotin + (sulfur carrier)-SH + 2 reduced [2Fe-2S]-[ferredoxin] + 2 S-adenosyl-L-methionine = (sulfur carrier)-H + biotin + 2 5'-deoxyadenosine + 2 L-methionine + 2 oxidized [2Fe-2S]-[ferredoxin]</text>
        <dbReference type="Rhea" id="RHEA:22060"/>
        <dbReference type="Rhea" id="RHEA-COMP:10000"/>
        <dbReference type="Rhea" id="RHEA-COMP:10001"/>
        <dbReference type="Rhea" id="RHEA-COMP:14737"/>
        <dbReference type="Rhea" id="RHEA-COMP:14739"/>
        <dbReference type="ChEBI" id="CHEBI:17319"/>
        <dbReference type="ChEBI" id="CHEBI:29917"/>
        <dbReference type="ChEBI" id="CHEBI:33737"/>
        <dbReference type="ChEBI" id="CHEBI:33738"/>
        <dbReference type="ChEBI" id="CHEBI:57586"/>
        <dbReference type="ChEBI" id="CHEBI:57844"/>
        <dbReference type="ChEBI" id="CHEBI:59789"/>
        <dbReference type="ChEBI" id="CHEBI:64428"/>
        <dbReference type="ChEBI" id="CHEBI:149473"/>
        <dbReference type="EC" id="2.8.1.6"/>
    </reaction>
</comment>
<comment type="cofactor">
    <cofactor evidence="1">
        <name>[4Fe-4S] cluster</name>
        <dbReference type="ChEBI" id="CHEBI:49883"/>
    </cofactor>
    <text evidence="1">Binds 1 [4Fe-4S] cluster. The cluster is coordinated with 3 cysteines and an exchangeable S-adenosyl-L-methionine.</text>
</comment>
<comment type="cofactor">
    <cofactor evidence="1">
        <name>[2Fe-2S] cluster</name>
        <dbReference type="ChEBI" id="CHEBI:190135"/>
    </cofactor>
    <text evidence="1">Binds 1 [2Fe-2S] cluster. The cluster is coordinated with 3 cysteines and 1 arginine.</text>
</comment>
<comment type="pathway">
    <text evidence="1">Cofactor biosynthesis; biotin biosynthesis; biotin from 7,8-diaminononanoate: step 2/2.</text>
</comment>
<comment type="subunit">
    <text evidence="1">Homodimer.</text>
</comment>
<comment type="similarity">
    <text evidence="1">Belongs to the radical SAM superfamily. Biotin synthase family.</text>
</comment>
<evidence type="ECO:0000255" key="1">
    <source>
        <dbReference type="HAMAP-Rule" id="MF_01694"/>
    </source>
</evidence>
<evidence type="ECO:0000255" key="2">
    <source>
        <dbReference type="PROSITE-ProRule" id="PRU01266"/>
    </source>
</evidence>